<protein>
    <recommendedName>
        <fullName evidence="1">Aspartate carbamoyltransferase catalytic subunit</fullName>
        <ecNumber evidence="1">2.1.3.2</ecNumber>
    </recommendedName>
    <alternativeName>
        <fullName evidence="1">Aspartate transcarbamylase</fullName>
        <shortName evidence="1">ATCase</shortName>
    </alternativeName>
</protein>
<sequence length="309" mass="35096">MMLFKNRHVISMKDFSREEIDYILDIAEKLEPVARGEERSRLLDGKIISLLFFEPSTRTRLSFEVATRRLGGQVLSLGSVEASSVMKGENLADTIRVISKYADLIVLRHPLDGSARMATEFAAVPVINGGDGSVHHPTQTFLDLYTIRRESHLEGLKIAMAGDLKYGRTVHSLCYALSLYGAEMTFVSPPELRMPREIVRELRKKNIRVKESECLEEIIGDIEVLYMTRVQRERFPDPQEYEKVKNKLKITGDLLKSADPELKILHPLPRVNEISPDVDDTPHARYFEQAFYGVPIRMALLALTIGVIE</sequence>
<keyword id="KW-0665">Pyrimidine biosynthesis</keyword>
<keyword id="KW-0808">Transferase</keyword>
<accession>Q8PXK5</accession>
<reference key="1">
    <citation type="journal article" date="2002" name="J. Mol. Microbiol. Biotechnol.">
        <title>The genome of Methanosarcina mazei: evidence for lateral gene transfer between Bacteria and Archaea.</title>
        <authorList>
            <person name="Deppenmeier U."/>
            <person name="Johann A."/>
            <person name="Hartsch T."/>
            <person name="Merkl R."/>
            <person name="Schmitz R.A."/>
            <person name="Martinez-Arias R."/>
            <person name="Henne A."/>
            <person name="Wiezer A."/>
            <person name="Baeumer S."/>
            <person name="Jacobi C."/>
            <person name="Brueggemann H."/>
            <person name="Lienard T."/>
            <person name="Christmann A."/>
            <person name="Boemecke M."/>
            <person name="Steckel S."/>
            <person name="Bhattacharyya A."/>
            <person name="Lykidis A."/>
            <person name="Overbeek R."/>
            <person name="Klenk H.-P."/>
            <person name="Gunsalus R.P."/>
            <person name="Fritz H.-J."/>
            <person name="Gottschalk G."/>
        </authorList>
    </citation>
    <scope>NUCLEOTIDE SEQUENCE [LARGE SCALE GENOMIC DNA]</scope>
    <source>
        <strain>ATCC BAA-159 / DSM 3647 / Goe1 / Go1 / JCM 11833 / OCM 88</strain>
    </source>
</reference>
<evidence type="ECO:0000255" key="1">
    <source>
        <dbReference type="HAMAP-Rule" id="MF_00001"/>
    </source>
</evidence>
<organism>
    <name type="scientific">Methanosarcina mazei (strain ATCC BAA-159 / DSM 3647 / Goe1 / Go1 / JCM 11833 / OCM 88)</name>
    <name type="common">Methanosarcina frisia</name>
    <dbReference type="NCBI Taxonomy" id="192952"/>
    <lineage>
        <taxon>Archaea</taxon>
        <taxon>Methanobacteriati</taxon>
        <taxon>Methanobacteriota</taxon>
        <taxon>Stenosarchaea group</taxon>
        <taxon>Methanomicrobia</taxon>
        <taxon>Methanosarcinales</taxon>
        <taxon>Methanosarcinaceae</taxon>
        <taxon>Methanosarcina</taxon>
    </lineage>
</organism>
<feature type="chain" id="PRO_0000113249" description="Aspartate carbamoyltransferase catalytic subunit">
    <location>
        <begin position="1"/>
        <end position="309"/>
    </location>
</feature>
<feature type="binding site" evidence="1">
    <location>
        <position position="58"/>
    </location>
    <ligand>
        <name>carbamoyl phosphate</name>
        <dbReference type="ChEBI" id="CHEBI:58228"/>
    </ligand>
</feature>
<feature type="binding site" evidence="1">
    <location>
        <position position="59"/>
    </location>
    <ligand>
        <name>carbamoyl phosphate</name>
        <dbReference type="ChEBI" id="CHEBI:58228"/>
    </ligand>
</feature>
<feature type="binding site" evidence="1">
    <location>
        <position position="87"/>
    </location>
    <ligand>
        <name>L-aspartate</name>
        <dbReference type="ChEBI" id="CHEBI:29991"/>
    </ligand>
</feature>
<feature type="binding site" evidence="1">
    <location>
        <position position="108"/>
    </location>
    <ligand>
        <name>carbamoyl phosphate</name>
        <dbReference type="ChEBI" id="CHEBI:58228"/>
    </ligand>
</feature>
<feature type="binding site" evidence="1">
    <location>
        <position position="136"/>
    </location>
    <ligand>
        <name>carbamoyl phosphate</name>
        <dbReference type="ChEBI" id="CHEBI:58228"/>
    </ligand>
</feature>
<feature type="binding site" evidence="1">
    <location>
        <position position="139"/>
    </location>
    <ligand>
        <name>carbamoyl phosphate</name>
        <dbReference type="ChEBI" id="CHEBI:58228"/>
    </ligand>
</feature>
<feature type="binding site" evidence="1">
    <location>
        <position position="168"/>
    </location>
    <ligand>
        <name>L-aspartate</name>
        <dbReference type="ChEBI" id="CHEBI:29991"/>
    </ligand>
</feature>
<feature type="binding site" evidence="1">
    <location>
        <position position="229"/>
    </location>
    <ligand>
        <name>L-aspartate</name>
        <dbReference type="ChEBI" id="CHEBI:29991"/>
    </ligand>
</feature>
<feature type="binding site" evidence="1">
    <location>
        <position position="268"/>
    </location>
    <ligand>
        <name>carbamoyl phosphate</name>
        <dbReference type="ChEBI" id="CHEBI:58228"/>
    </ligand>
</feature>
<feature type="binding site" evidence="1">
    <location>
        <position position="269"/>
    </location>
    <ligand>
        <name>carbamoyl phosphate</name>
        <dbReference type="ChEBI" id="CHEBI:58228"/>
    </ligand>
</feature>
<comment type="function">
    <text evidence="1">Catalyzes the condensation of carbamoyl phosphate and aspartate to form carbamoyl aspartate and inorganic phosphate, the committed step in the de novo pyrimidine nucleotide biosynthesis pathway.</text>
</comment>
<comment type="catalytic activity">
    <reaction evidence="1">
        <text>carbamoyl phosphate + L-aspartate = N-carbamoyl-L-aspartate + phosphate + H(+)</text>
        <dbReference type="Rhea" id="RHEA:20013"/>
        <dbReference type="ChEBI" id="CHEBI:15378"/>
        <dbReference type="ChEBI" id="CHEBI:29991"/>
        <dbReference type="ChEBI" id="CHEBI:32814"/>
        <dbReference type="ChEBI" id="CHEBI:43474"/>
        <dbReference type="ChEBI" id="CHEBI:58228"/>
        <dbReference type="EC" id="2.1.3.2"/>
    </reaction>
</comment>
<comment type="pathway">
    <text evidence="1">Pyrimidine metabolism; UMP biosynthesis via de novo pathway; (S)-dihydroorotate from bicarbonate: step 2/3.</text>
</comment>
<comment type="subunit">
    <text evidence="1">Heterooligomer of catalytic and regulatory chains.</text>
</comment>
<comment type="similarity">
    <text evidence="1">Belongs to the aspartate/ornithine carbamoyltransferase superfamily. ATCase family.</text>
</comment>
<dbReference type="EC" id="2.1.3.2" evidence="1"/>
<dbReference type="EMBL" id="AE008384">
    <property type="protein sequence ID" value="AAM30909.1"/>
    <property type="molecule type" value="Genomic_DNA"/>
</dbReference>
<dbReference type="SMR" id="Q8PXK5"/>
<dbReference type="KEGG" id="mma:MM_1213"/>
<dbReference type="PATRIC" id="fig|192952.21.peg.1418"/>
<dbReference type="eggNOG" id="arCOG00911">
    <property type="taxonomic scope" value="Archaea"/>
</dbReference>
<dbReference type="HOGENOM" id="CLU_043846_1_2_2"/>
<dbReference type="UniPathway" id="UPA00070">
    <property type="reaction ID" value="UER00116"/>
</dbReference>
<dbReference type="Proteomes" id="UP000000595">
    <property type="component" value="Chromosome"/>
</dbReference>
<dbReference type="GO" id="GO:0005829">
    <property type="term" value="C:cytosol"/>
    <property type="evidence" value="ECO:0007669"/>
    <property type="project" value="TreeGrafter"/>
</dbReference>
<dbReference type="GO" id="GO:0016597">
    <property type="term" value="F:amino acid binding"/>
    <property type="evidence" value="ECO:0007669"/>
    <property type="project" value="InterPro"/>
</dbReference>
<dbReference type="GO" id="GO:0004070">
    <property type="term" value="F:aspartate carbamoyltransferase activity"/>
    <property type="evidence" value="ECO:0007669"/>
    <property type="project" value="UniProtKB-UniRule"/>
</dbReference>
<dbReference type="GO" id="GO:0006207">
    <property type="term" value="P:'de novo' pyrimidine nucleobase biosynthetic process"/>
    <property type="evidence" value="ECO:0007669"/>
    <property type="project" value="InterPro"/>
</dbReference>
<dbReference type="GO" id="GO:0044205">
    <property type="term" value="P:'de novo' UMP biosynthetic process"/>
    <property type="evidence" value="ECO:0007669"/>
    <property type="project" value="UniProtKB-UniRule"/>
</dbReference>
<dbReference type="GO" id="GO:0006520">
    <property type="term" value="P:amino acid metabolic process"/>
    <property type="evidence" value="ECO:0007669"/>
    <property type="project" value="InterPro"/>
</dbReference>
<dbReference type="FunFam" id="3.40.50.1370:FF:000002">
    <property type="entry name" value="Aspartate carbamoyltransferase 2"/>
    <property type="match status" value="1"/>
</dbReference>
<dbReference type="Gene3D" id="3.40.50.1370">
    <property type="entry name" value="Aspartate/ornithine carbamoyltransferase"/>
    <property type="match status" value="2"/>
</dbReference>
<dbReference type="HAMAP" id="MF_00001">
    <property type="entry name" value="Asp_carb_tr"/>
    <property type="match status" value="1"/>
</dbReference>
<dbReference type="InterPro" id="IPR006132">
    <property type="entry name" value="Asp/Orn_carbamoyltranf_P-bd"/>
</dbReference>
<dbReference type="InterPro" id="IPR006130">
    <property type="entry name" value="Asp/Orn_carbamoylTrfase"/>
</dbReference>
<dbReference type="InterPro" id="IPR036901">
    <property type="entry name" value="Asp/Orn_carbamoylTrfase_sf"/>
</dbReference>
<dbReference type="InterPro" id="IPR002082">
    <property type="entry name" value="Asp_carbamoyltransf"/>
</dbReference>
<dbReference type="InterPro" id="IPR006131">
    <property type="entry name" value="Asp_carbamoyltransf_Asp/Orn-bd"/>
</dbReference>
<dbReference type="NCBIfam" id="TIGR00670">
    <property type="entry name" value="asp_carb_tr"/>
    <property type="match status" value="1"/>
</dbReference>
<dbReference type="NCBIfam" id="NF002032">
    <property type="entry name" value="PRK00856.1"/>
    <property type="match status" value="1"/>
</dbReference>
<dbReference type="PANTHER" id="PTHR45753:SF6">
    <property type="entry name" value="ASPARTATE CARBAMOYLTRANSFERASE"/>
    <property type="match status" value="1"/>
</dbReference>
<dbReference type="PANTHER" id="PTHR45753">
    <property type="entry name" value="ORNITHINE CARBAMOYLTRANSFERASE, MITOCHONDRIAL"/>
    <property type="match status" value="1"/>
</dbReference>
<dbReference type="Pfam" id="PF00185">
    <property type="entry name" value="OTCace"/>
    <property type="match status" value="1"/>
</dbReference>
<dbReference type="Pfam" id="PF02729">
    <property type="entry name" value="OTCace_N"/>
    <property type="match status" value="1"/>
</dbReference>
<dbReference type="PRINTS" id="PR00100">
    <property type="entry name" value="AOTCASE"/>
</dbReference>
<dbReference type="PRINTS" id="PR00101">
    <property type="entry name" value="ATCASE"/>
</dbReference>
<dbReference type="SUPFAM" id="SSF53671">
    <property type="entry name" value="Aspartate/ornithine carbamoyltransferase"/>
    <property type="match status" value="1"/>
</dbReference>
<dbReference type="PROSITE" id="PS00097">
    <property type="entry name" value="CARBAMOYLTRANSFERASE"/>
    <property type="match status" value="1"/>
</dbReference>
<proteinExistence type="inferred from homology"/>
<name>PYRB_METMA</name>
<gene>
    <name evidence="1" type="primary">pyrB</name>
    <name type="ordered locus">MM_1213</name>
</gene>